<keyword id="KW-0094">Blood coagulation</keyword>
<keyword id="KW-0325">Glycoprotein</keyword>
<keyword id="KW-0356">Hemostasis</keyword>
<keyword id="KW-0358">Heparin-binding</keyword>
<keyword id="KW-0646">Protease inhibitor</keyword>
<keyword id="KW-1185">Reference proteome</keyword>
<keyword id="KW-0677">Repeat</keyword>
<keyword id="KW-0722">Serine protease inhibitor</keyword>
<keyword id="KW-0732">Signal</keyword>
<keyword id="KW-0765">Sulfation</keyword>
<evidence type="ECO:0000250" key="1"/>
<evidence type="ECO:0000255" key="2"/>
<evidence type="ECO:0000305" key="3"/>
<dbReference type="EMBL" id="X74550">
    <property type="protein sequence ID" value="CAA52644.1"/>
    <property type="molecule type" value="mRNA"/>
</dbReference>
<dbReference type="EMBL" id="X74549">
    <property type="protein sequence ID" value="CAA52643.1"/>
    <property type="molecule type" value="mRNA"/>
</dbReference>
<dbReference type="EMBL" id="BC091145">
    <property type="protein sequence ID" value="AAH91145.1"/>
    <property type="molecule type" value="mRNA"/>
</dbReference>
<dbReference type="PIR" id="S41066">
    <property type="entry name" value="S41066"/>
</dbReference>
<dbReference type="RefSeq" id="NP_077358.1">
    <property type="nucleotide sequence ID" value="NM_024382.1"/>
</dbReference>
<dbReference type="RefSeq" id="XP_006248771.1">
    <property type="nucleotide sequence ID" value="XM_006248709.4"/>
</dbReference>
<dbReference type="SMR" id="Q64268"/>
<dbReference type="FunCoup" id="Q64268">
    <property type="interactions" value="132"/>
</dbReference>
<dbReference type="STRING" id="10116.ENSRNOP00000074639"/>
<dbReference type="MEROPS" id="I04.019"/>
<dbReference type="GlyCosmos" id="Q64268">
    <property type="glycosylation" value="4 sites, No reported glycans"/>
</dbReference>
<dbReference type="GlyGen" id="Q64268">
    <property type="glycosylation" value="5 sites"/>
</dbReference>
<dbReference type="iPTMnet" id="Q64268"/>
<dbReference type="PhosphoSitePlus" id="Q64268"/>
<dbReference type="PaxDb" id="10116-ENSRNOP00000031829"/>
<dbReference type="Ensembl" id="ENSRNOT00000031819.6">
    <property type="protein sequence ID" value="ENSRNOP00000031829.4"/>
    <property type="gene ID" value="ENSRNOG00000001865.8"/>
</dbReference>
<dbReference type="GeneID" id="79224"/>
<dbReference type="KEGG" id="rno:79224"/>
<dbReference type="AGR" id="RGD:619854"/>
<dbReference type="CTD" id="3053"/>
<dbReference type="RGD" id="619854">
    <property type="gene designation" value="Serpind1"/>
</dbReference>
<dbReference type="eggNOG" id="KOG2392">
    <property type="taxonomic scope" value="Eukaryota"/>
</dbReference>
<dbReference type="GeneTree" id="ENSGT00940000158664"/>
<dbReference type="HOGENOM" id="CLU_023330_8_0_1"/>
<dbReference type="InParanoid" id="Q64268"/>
<dbReference type="OrthoDB" id="14550at9989"/>
<dbReference type="PhylomeDB" id="Q64268"/>
<dbReference type="TreeFam" id="TF343094"/>
<dbReference type="Reactome" id="R-RNO-140837">
    <property type="pathway name" value="Intrinsic Pathway of Fibrin Clot Formation"/>
</dbReference>
<dbReference type="Reactome" id="R-RNO-140875">
    <property type="pathway name" value="Common Pathway of Fibrin Clot Formation"/>
</dbReference>
<dbReference type="Reactome" id="R-RNO-381426">
    <property type="pathway name" value="Regulation of Insulin-like Growth Factor (IGF) transport and uptake by Insulin-like Growth Factor Binding Proteins (IGFBPs)"/>
</dbReference>
<dbReference type="Reactome" id="R-RNO-8957275">
    <property type="pathway name" value="Post-translational protein phosphorylation"/>
</dbReference>
<dbReference type="PRO" id="PR:Q64268"/>
<dbReference type="Proteomes" id="UP000002494">
    <property type="component" value="Chromosome 11"/>
</dbReference>
<dbReference type="Bgee" id="ENSRNOG00000001865">
    <property type="expression patterns" value="Expressed in liver and 6 other cell types or tissues"/>
</dbReference>
<dbReference type="ExpressionAtlas" id="Q64268">
    <property type="expression patterns" value="baseline and differential"/>
</dbReference>
<dbReference type="GO" id="GO:0005615">
    <property type="term" value="C:extracellular space"/>
    <property type="evidence" value="ECO:0000318"/>
    <property type="project" value="GO_Central"/>
</dbReference>
<dbReference type="GO" id="GO:0008201">
    <property type="term" value="F:heparin binding"/>
    <property type="evidence" value="ECO:0007669"/>
    <property type="project" value="UniProtKB-KW"/>
</dbReference>
<dbReference type="GO" id="GO:0004867">
    <property type="term" value="F:serine-type endopeptidase inhibitor activity"/>
    <property type="evidence" value="ECO:0000318"/>
    <property type="project" value="GO_Central"/>
</dbReference>
<dbReference type="GO" id="GO:0007596">
    <property type="term" value="P:blood coagulation"/>
    <property type="evidence" value="ECO:0007669"/>
    <property type="project" value="UniProtKB-KW"/>
</dbReference>
<dbReference type="CDD" id="cd02047">
    <property type="entry name" value="serpinD1_HCF2"/>
    <property type="match status" value="1"/>
</dbReference>
<dbReference type="FunFam" id="2.30.39.10:FF:000002">
    <property type="entry name" value="Serpin family D member 1"/>
    <property type="match status" value="1"/>
</dbReference>
<dbReference type="Gene3D" id="2.30.39.10">
    <property type="entry name" value="Alpha-1-antitrypsin, domain 1"/>
    <property type="match status" value="1"/>
</dbReference>
<dbReference type="Gene3D" id="3.30.497.10">
    <property type="entry name" value="Antithrombin, subunit I, domain 2"/>
    <property type="match status" value="1"/>
</dbReference>
<dbReference type="InterPro" id="IPR033831">
    <property type="entry name" value="HCII_serpin_dom"/>
</dbReference>
<dbReference type="InterPro" id="IPR023795">
    <property type="entry name" value="Serpin_CS"/>
</dbReference>
<dbReference type="InterPro" id="IPR023796">
    <property type="entry name" value="Serpin_dom"/>
</dbReference>
<dbReference type="InterPro" id="IPR000215">
    <property type="entry name" value="Serpin_fam"/>
</dbReference>
<dbReference type="InterPro" id="IPR036186">
    <property type="entry name" value="Serpin_sf"/>
</dbReference>
<dbReference type="InterPro" id="IPR042178">
    <property type="entry name" value="Serpin_sf_1"/>
</dbReference>
<dbReference type="InterPro" id="IPR042185">
    <property type="entry name" value="Serpin_sf_2"/>
</dbReference>
<dbReference type="PANTHER" id="PTHR11461:SF30">
    <property type="entry name" value="HEPARIN COFACTOR 2"/>
    <property type="match status" value="1"/>
</dbReference>
<dbReference type="PANTHER" id="PTHR11461">
    <property type="entry name" value="SERINE PROTEASE INHIBITOR, SERPIN"/>
    <property type="match status" value="1"/>
</dbReference>
<dbReference type="Pfam" id="PF00079">
    <property type="entry name" value="Serpin"/>
    <property type="match status" value="1"/>
</dbReference>
<dbReference type="PRINTS" id="PR00780">
    <property type="entry name" value="LEUSERPINII"/>
</dbReference>
<dbReference type="SMART" id="SM00093">
    <property type="entry name" value="SERPIN"/>
    <property type="match status" value="1"/>
</dbReference>
<dbReference type="SUPFAM" id="SSF56574">
    <property type="entry name" value="Serpins"/>
    <property type="match status" value="1"/>
</dbReference>
<dbReference type="PROSITE" id="PS00284">
    <property type="entry name" value="SERPIN"/>
    <property type="match status" value="1"/>
</dbReference>
<accession>Q64268</accession>
<accession>Q5BKA6</accession>
<sequence>MKHPAYTLLLSLIMSMCAGSKGLAEQLTKENLTVSLLPPNFHKENTVTNDWIPEGEEDDDYLDLEKLLSEDDDYIYVVDAVSPTDSESSAGNILQLFQGKSRIQRLNILNAKFAFNLYRVLKDQATSSDNIFIAPVGISTAMGMISLGLRGETHEEVHSVLHFKDFVNASSKYEVTTIHNLFRKLTHRLFRRNFGYTLQSVNDLYIQKQFPIREDFKAAMREFYFAEAQEADFSDPAFISKANSHILKLTKGLIKEALENTDSATQMMILNCIYFKGAWMNKFPVEMTHNHNFRLNEREVVKVSMMQTKGNFLAANDQELDCDILQLEYVGGISMLIVIPRKLSGMKTLEAQLTPQVVERWQKSMTNRTREVLLPKFKLEKNYNLVEVLKSMGITKLFNKNGNMSGISDQRIIIDLFKHQSTITVNEEGTQAAAVTTVGFMPLSTQVRFTVDRPFLFLVYEHRTSCLLFMGRVANPAKS</sequence>
<feature type="signal peptide" evidence="2">
    <location>
        <begin position="1"/>
        <end position="23"/>
    </location>
</feature>
<feature type="chain" id="PRO_0000032497" description="Heparin cofactor 2">
    <location>
        <begin position="24"/>
        <end position="479"/>
    </location>
</feature>
<feature type="repeat" description="1">
    <location>
        <begin position="55"/>
        <end position="65"/>
    </location>
</feature>
<feature type="repeat" description="2">
    <location>
        <begin position="69"/>
        <end position="79"/>
    </location>
</feature>
<feature type="region of interest" description="2 X 11 AA approximate repeats, Asp/Glu-rich (acidic) (hirudin-like)">
    <location>
        <begin position="55"/>
        <end position="79"/>
    </location>
</feature>
<feature type="region of interest" description="Glycosaminoglycan-binding site" evidence="1">
    <location>
        <begin position="172"/>
        <end position="192"/>
    </location>
</feature>
<feature type="site" description="Reactive bond" evidence="1">
    <location>
        <begin position="443"/>
        <end position="444"/>
    </location>
</feature>
<feature type="modified residue" description="Sulfotyrosine" evidence="1">
    <location>
        <position position="61"/>
    </location>
</feature>
<feature type="modified residue" description="Sulfotyrosine" evidence="1">
    <location>
        <position position="74"/>
    </location>
</feature>
<feature type="glycosylation site" description="N-linked (GlcNAc...) asparagine" evidence="2">
    <location>
        <position position="31"/>
    </location>
</feature>
<feature type="glycosylation site" description="N-linked (GlcNAc...) asparagine" evidence="2">
    <location>
        <position position="168"/>
    </location>
</feature>
<feature type="glycosylation site" description="N-linked (GlcNAc...) asparagine" evidence="2">
    <location>
        <position position="367"/>
    </location>
</feature>
<feature type="glycosylation site" description="N-linked (GlcNAc...) asparagine" evidence="2">
    <location>
        <position position="403"/>
    </location>
</feature>
<reference key="1">
    <citation type="journal article" date="1994" name="Biochim. Biophys. Acta">
        <title>Secondary thrombin-binding site, glycosaminoglycan binding domain and reactive center region of leuserpin-2 are strongly conserved in mammalian species.</title>
        <authorList>
            <person name="Westrup D."/>
            <person name="Ragg H."/>
        </authorList>
    </citation>
    <scope>NUCLEOTIDE SEQUENCE [MRNA]</scope>
    <source>
        <strain>Sprague-Dawley</strain>
        <tissue>Liver</tissue>
    </source>
</reference>
<reference key="2">
    <citation type="journal article" date="2004" name="Genome Res.">
        <title>The status, quality, and expansion of the NIH full-length cDNA project: the Mammalian Gene Collection (MGC).</title>
        <authorList>
            <consortium name="The MGC Project Team"/>
        </authorList>
    </citation>
    <scope>NUCLEOTIDE SEQUENCE [LARGE SCALE MRNA]</scope>
    <source>
        <tissue>Liver</tissue>
    </source>
</reference>
<reference key="3">
    <citation type="journal article" date="2012" name="Nat. Commun.">
        <title>Quantitative maps of protein phosphorylation sites across 14 different rat organs and tissues.</title>
        <authorList>
            <person name="Lundby A."/>
            <person name="Secher A."/>
            <person name="Lage K."/>
            <person name="Nordsborg N.B."/>
            <person name="Dmytriyev A."/>
            <person name="Lundby C."/>
            <person name="Olsen J.V."/>
        </authorList>
    </citation>
    <scope>IDENTIFICATION BY MASS SPECTROMETRY [LARGE SCALE ANALYSIS]</scope>
</reference>
<gene>
    <name type="primary">Serpind1</name>
    <name type="synonym">Hcf2</name>
</gene>
<protein>
    <recommendedName>
        <fullName>Heparin cofactor 2</fullName>
    </recommendedName>
    <alternativeName>
        <fullName>Heparin cofactor II</fullName>
        <shortName>HC-II</shortName>
    </alternativeName>
    <alternativeName>
        <fullName>Protease inhibitor leuserpin-2</fullName>
    </alternativeName>
    <alternativeName>
        <fullName>Serpin D1</fullName>
    </alternativeName>
</protein>
<organism>
    <name type="scientific">Rattus norvegicus</name>
    <name type="common">Rat</name>
    <dbReference type="NCBI Taxonomy" id="10116"/>
    <lineage>
        <taxon>Eukaryota</taxon>
        <taxon>Metazoa</taxon>
        <taxon>Chordata</taxon>
        <taxon>Craniata</taxon>
        <taxon>Vertebrata</taxon>
        <taxon>Euteleostomi</taxon>
        <taxon>Mammalia</taxon>
        <taxon>Eutheria</taxon>
        <taxon>Euarchontoglires</taxon>
        <taxon>Glires</taxon>
        <taxon>Rodentia</taxon>
        <taxon>Myomorpha</taxon>
        <taxon>Muroidea</taxon>
        <taxon>Muridae</taxon>
        <taxon>Murinae</taxon>
        <taxon>Rattus</taxon>
    </lineage>
</organism>
<proteinExistence type="evidence at protein level"/>
<comment type="function">
    <text evidence="1">Thrombin inhibitor activated by the glycosaminoglycans, heparin or dermatan sulfate. In the presence of the latter, HC-II becomes the predominant thrombin inhibitor in place of antithrombin III (AT) (By similarity).</text>
</comment>
<comment type="domain">
    <text evidence="1">The N-terminal acidic repeat region mediates, in part, the glycosaminoglycan-accelerated thrombin inhibition.</text>
</comment>
<comment type="PTM">
    <text evidence="1">Different composition of the N-linked oligosaccharides appears to yield a 68-kDa and a 72-kDa form.</text>
</comment>
<comment type="similarity">
    <text evidence="3">Belongs to the serpin family.</text>
</comment>
<name>HEP2_RAT</name>